<dbReference type="EMBL" id="U19142">
    <property type="protein sequence ID" value="AAA82744.1"/>
    <property type="molecule type" value="mRNA"/>
</dbReference>
<dbReference type="EMBL" id="AC231643">
    <property type="status" value="NOT_ANNOTATED_CDS"/>
    <property type="molecule type" value="Genomic_DNA"/>
</dbReference>
<dbReference type="EMBL" id="BC069470">
    <property type="protein sequence ID" value="AAH69470.1"/>
    <property type="molecule type" value="mRNA"/>
</dbReference>
<dbReference type="CCDS" id="CCDS43950.1"/>
<dbReference type="RefSeq" id="NP_001035753.1">
    <property type="nucleotide sequence ID" value="NM_001040663.4"/>
</dbReference>
<dbReference type="FunCoup" id="P0DTW1">
    <property type="interactions" value="1"/>
</dbReference>
<dbReference type="IntAct" id="P0DTW1">
    <property type="interactions" value="11"/>
</dbReference>
<dbReference type="iPTMnet" id="P0DTW1"/>
<dbReference type="PhosphoSitePlus" id="P0DTW1"/>
<dbReference type="jPOST" id="P0DTW1"/>
<dbReference type="MassIVE" id="P0DTW1"/>
<dbReference type="PeptideAtlas" id="P0DTW1"/>
<dbReference type="Pumba" id="P0DTW1"/>
<dbReference type="Antibodypedia" id="26259">
    <property type="antibodies" value="58 antibodies from 13 providers"/>
</dbReference>
<dbReference type="DNASU" id="2543"/>
<dbReference type="Ensembl" id="ENST00000381700.11">
    <property type="protein sequence ID" value="ENSP00000371119.5"/>
    <property type="gene ID" value="ENSG00000205777.19"/>
</dbReference>
<dbReference type="GeneID" id="2543"/>
<dbReference type="KEGG" id="hsa:2543"/>
<dbReference type="MANE-Select" id="ENST00000381700.11">
    <property type="protein sequence ID" value="ENSP00000371119.5"/>
    <property type="RefSeq nucleotide sequence ID" value="NM_001040663.4"/>
    <property type="RefSeq protein sequence ID" value="NP_001035753.1"/>
</dbReference>
<dbReference type="AGR" id="HGNC:4098"/>
<dbReference type="CTD" id="2543"/>
<dbReference type="DisGeNET" id="2543"/>
<dbReference type="GeneCards" id="GAGE1"/>
<dbReference type="HGNC" id="HGNC:4098">
    <property type="gene designation" value="GAGE1"/>
</dbReference>
<dbReference type="HPA" id="ENSG00000205777">
    <property type="expression patterns" value="Tissue enhanced (testis)"/>
</dbReference>
<dbReference type="MIM" id="300594">
    <property type="type" value="gene"/>
</dbReference>
<dbReference type="neXtProt" id="NX_P0DTW1"/>
<dbReference type="OpenTargets" id="ENSG00000205777"/>
<dbReference type="GeneTree" id="ENSGT00940000153097"/>
<dbReference type="InParanoid" id="P0DTW1"/>
<dbReference type="OrthoDB" id="9539459at2759"/>
<dbReference type="SignaLink" id="P0DTW1"/>
<dbReference type="PRO" id="PR:P0DTW1"/>
<dbReference type="Proteomes" id="UP000005640">
    <property type="component" value="Chromosome X"/>
</dbReference>
<dbReference type="Bgee" id="ENSG00000205777">
    <property type="expression patterns" value="Expressed in buccal mucosa cell and 41 other cell types or tissues"/>
</dbReference>
<dbReference type="ExpressionAtlas" id="P0DTW1">
    <property type="expression patterns" value="baseline and differential"/>
</dbReference>
<dbReference type="InterPro" id="IPR031320">
    <property type="entry name" value="GAGE"/>
</dbReference>
<dbReference type="InterPro" id="IPR008625">
    <property type="entry name" value="GAGE_fam"/>
</dbReference>
<dbReference type="PANTHER" id="PTHR14047:SF30">
    <property type="entry name" value="G ANTIGEN 1-RELATED"/>
    <property type="match status" value="1"/>
</dbReference>
<dbReference type="PANTHER" id="PTHR14047">
    <property type="entry name" value="P ANTIGEN FAMILY MEMBER 5-RELATED"/>
    <property type="match status" value="1"/>
</dbReference>
<dbReference type="Pfam" id="PF05831">
    <property type="entry name" value="GAGE"/>
    <property type="match status" value="1"/>
</dbReference>
<dbReference type="SMART" id="SM01379">
    <property type="entry name" value="GAGE"/>
    <property type="match status" value="1"/>
</dbReference>
<proteinExistence type="evidence at protein level"/>
<gene>
    <name evidence="5" type="primary">GAGE1</name>
</gene>
<comment type="function">
    <text evidence="3">Antigen, recognized on melanoma by autologous cytolytic T-lymphocytes.</text>
</comment>
<comment type="tissue specificity">
    <text evidence="3">Expressed in a variety of tumor tissues but not in normal tissues, except testis.</text>
</comment>
<comment type="miscellaneous">
    <text evidence="2 3">This gene belongs to a family of genes organized in clustered repeats. They have a high degree of predicted sequence identity, but differ by scattered single nucleotide substitution. Their sequences contain either the antigenic peptide YYWPRPRRY or YRPRPRRY which is recognized by cytotoxic T-cells.</text>
</comment>
<comment type="similarity">
    <text evidence="4">Belongs to the GAGE family.</text>
</comment>
<comment type="caution">
    <text evidence="4">The first GAGE nomenclature was based on identified mRNA sequences, but the high identity of the GAGE members made impossible to separate products of paralogous genes from polymorph products. PubMed:18179644 presented a new GAGE gene nomenclature based on the identified genes and their products.</text>
</comment>
<accession>P0DTW1</accession>
<accession>A8MU85</accession>
<accession>Q13065</accession>
<accession>Q13068</accession>
<accession>Q6NT33</accession>
<name>GAGE1_HUMAN</name>
<keyword id="KW-1185">Reference proteome</keyword>
<feature type="chain" id="PRO_0000148339" description="G antigen 1">
    <location>
        <begin position="1"/>
        <end position="117"/>
    </location>
</feature>
<feature type="region of interest" description="Disordered" evidence="1">
    <location>
        <begin position="1"/>
        <end position="117"/>
    </location>
</feature>
<feature type="compositionally biased region" description="Acidic residues" evidence="1">
    <location>
        <begin position="32"/>
        <end position="45"/>
    </location>
</feature>
<feature type="compositionally biased region" description="Acidic residues" evidence="1">
    <location>
        <begin position="87"/>
        <end position="96"/>
    </location>
</feature>
<feature type="sequence conflict" description="In Ref. 1; AAA82744." evidence="4" ref="1">
    <original>YW</original>
    <variation>R</variation>
    <location>
        <begin position="10"/>
        <end position="11"/>
    </location>
</feature>
<feature type="sequence conflict" description="In Ref. 1; AAA82744." evidence="4" ref="1">
    <original>Q</original>
    <variation>E</variation>
    <location>
        <position position="19"/>
    </location>
</feature>
<reference key="1">
    <citation type="journal article" date="1995" name="J. Exp. Med.">
        <title>A new family of genes coding for an antigen recognized by autologous cytolytic T lymphocytes on a human melanoma.</title>
        <authorList>
            <person name="van den Eynde B."/>
            <person name="Peeters O."/>
            <person name="de Backer O."/>
            <person name="Gaugler B."/>
            <person name="Lucas S."/>
            <person name="Boon T."/>
        </authorList>
    </citation>
    <scope>NUCLEOTIDE SEQUENCE [MRNA]</scope>
    <scope>TISSUE SPECIFICITY</scope>
    <source>
        <tissue>Melanoma</tissue>
    </source>
</reference>
<reference key="2">
    <citation type="journal article" date="2005" name="Nature">
        <title>The DNA sequence of the human X chromosome.</title>
        <authorList>
            <person name="Ross M.T."/>
            <person name="Grafham D.V."/>
            <person name="Coffey A.J."/>
            <person name="Scherer S."/>
            <person name="McLay K."/>
            <person name="Muzny D."/>
            <person name="Platzer M."/>
            <person name="Howell G.R."/>
            <person name="Burrows C."/>
            <person name="Bird C.P."/>
            <person name="Frankish A."/>
            <person name="Lovell F.L."/>
            <person name="Howe K.L."/>
            <person name="Ashurst J.L."/>
            <person name="Fulton R.S."/>
            <person name="Sudbrak R."/>
            <person name="Wen G."/>
            <person name="Jones M.C."/>
            <person name="Hurles M.E."/>
            <person name="Andrews T.D."/>
            <person name="Scott C.E."/>
            <person name="Searle S."/>
            <person name="Ramser J."/>
            <person name="Whittaker A."/>
            <person name="Deadman R."/>
            <person name="Carter N.P."/>
            <person name="Hunt S.E."/>
            <person name="Chen R."/>
            <person name="Cree A."/>
            <person name="Gunaratne P."/>
            <person name="Havlak P."/>
            <person name="Hodgson A."/>
            <person name="Metzker M.L."/>
            <person name="Richards S."/>
            <person name="Scott G."/>
            <person name="Steffen D."/>
            <person name="Sodergren E."/>
            <person name="Wheeler D.A."/>
            <person name="Worley K.C."/>
            <person name="Ainscough R."/>
            <person name="Ambrose K.D."/>
            <person name="Ansari-Lari M.A."/>
            <person name="Aradhya S."/>
            <person name="Ashwell R.I."/>
            <person name="Babbage A.K."/>
            <person name="Bagguley C.L."/>
            <person name="Ballabio A."/>
            <person name="Banerjee R."/>
            <person name="Barker G.E."/>
            <person name="Barlow K.F."/>
            <person name="Barrett I.P."/>
            <person name="Bates K.N."/>
            <person name="Beare D.M."/>
            <person name="Beasley H."/>
            <person name="Beasley O."/>
            <person name="Beck A."/>
            <person name="Bethel G."/>
            <person name="Blechschmidt K."/>
            <person name="Brady N."/>
            <person name="Bray-Allen S."/>
            <person name="Bridgeman A.M."/>
            <person name="Brown A.J."/>
            <person name="Brown M.J."/>
            <person name="Bonnin D."/>
            <person name="Bruford E.A."/>
            <person name="Buhay C."/>
            <person name="Burch P."/>
            <person name="Burford D."/>
            <person name="Burgess J."/>
            <person name="Burrill W."/>
            <person name="Burton J."/>
            <person name="Bye J.M."/>
            <person name="Carder C."/>
            <person name="Carrel L."/>
            <person name="Chako J."/>
            <person name="Chapman J.C."/>
            <person name="Chavez D."/>
            <person name="Chen E."/>
            <person name="Chen G."/>
            <person name="Chen Y."/>
            <person name="Chen Z."/>
            <person name="Chinault C."/>
            <person name="Ciccodicola A."/>
            <person name="Clark S.Y."/>
            <person name="Clarke G."/>
            <person name="Clee C.M."/>
            <person name="Clegg S."/>
            <person name="Clerc-Blankenburg K."/>
            <person name="Clifford K."/>
            <person name="Cobley V."/>
            <person name="Cole C.G."/>
            <person name="Conquer J.S."/>
            <person name="Corby N."/>
            <person name="Connor R.E."/>
            <person name="David R."/>
            <person name="Davies J."/>
            <person name="Davis C."/>
            <person name="Davis J."/>
            <person name="Delgado O."/>
            <person name="Deshazo D."/>
            <person name="Dhami P."/>
            <person name="Ding Y."/>
            <person name="Dinh H."/>
            <person name="Dodsworth S."/>
            <person name="Draper H."/>
            <person name="Dugan-Rocha S."/>
            <person name="Dunham A."/>
            <person name="Dunn M."/>
            <person name="Durbin K.J."/>
            <person name="Dutta I."/>
            <person name="Eades T."/>
            <person name="Ellwood M."/>
            <person name="Emery-Cohen A."/>
            <person name="Errington H."/>
            <person name="Evans K.L."/>
            <person name="Faulkner L."/>
            <person name="Francis F."/>
            <person name="Frankland J."/>
            <person name="Fraser A.E."/>
            <person name="Galgoczy P."/>
            <person name="Gilbert J."/>
            <person name="Gill R."/>
            <person name="Gloeckner G."/>
            <person name="Gregory S.G."/>
            <person name="Gribble S."/>
            <person name="Griffiths C."/>
            <person name="Grocock R."/>
            <person name="Gu Y."/>
            <person name="Gwilliam R."/>
            <person name="Hamilton C."/>
            <person name="Hart E.A."/>
            <person name="Hawes A."/>
            <person name="Heath P.D."/>
            <person name="Heitmann K."/>
            <person name="Hennig S."/>
            <person name="Hernandez J."/>
            <person name="Hinzmann B."/>
            <person name="Ho S."/>
            <person name="Hoffs M."/>
            <person name="Howden P.J."/>
            <person name="Huckle E.J."/>
            <person name="Hume J."/>
            <person name="Hunt P.J."/>
            <person name="Hunt A.R."/>
            <person name="Isherwood J."/>
            <person name="Jacob L."/>
            <person name="Johnson D."/>
            <person name="Jones S."/>
            <person name="de Jong P.J."/>
            <person name="Joseph S.S."/>
            <person name="Keenan S."/>
            <person name="Kelly S."/>
            <person name="Kershaw J.K."/>
            <person name="Khan Z."/>
            <person name="Kioschis P."/>
            <person name="Klages S."/>
            <person name="Knights A.J."/>
            <person name="Kosiura A."/>
            <person name="Kovar-Smith C."/>
            <person name="Laird G.K."/>
            <person name="Langford C."/>
            <person name="Lawlor S."/>
            <person name="Leversha M."/>
            <person name="Lewis L."/>
            <person name="Liu W."/>
            <person name="Lloyd C."/>
            <person name="Lloyd D.M."/>
            <person name="Loulseged H."/>
            <person name="Loveland J.E."/>
            <person name="Lovell J.D."/>
            <person name="Lozado R."/>
            <person name="Lu J."/>
            <person name="Lyne R."/>
            <person name="Ma J."/>
            <person name="Maheshwari M."/>
            <person name="Matthews L.H."/>
            <person name="McDowall J."/>
            <person name="McLaren S."/>
            <person name="McMurray A."/>
            <person name="Meidl P."/>
            <person name="Meitinger T."/>
            <person name="Milne S."/>
            <person name="Miner G."/>
            <person name="Mistry S.L."/>
            <person name="Morgan M."/>
            <person name="Morris S."/>
            <person name="Mueller I."/>
            <person name="Mullikin J.C."/>
            <person name="Nguyen N."/>
            <person name="Nordsiek G."/>
            <person name="Nyakatura G."/>
            <person name="O'dell C.N."/>
            <person name="Okwuonu G."/>
            <person name="Palmer S."/>
            <person name="Pandian R."/>
            <person name="Parker D."/>
            <person name="Parrish J."/>
            <person name="Pasternak S."/>
            <person name="Patel D."/>
            <person name="Pearce A.V."/>
            <person name="Pearson D.M."/>
            <person name="Pelan S.E."/>
            <person name="Perez L."/>
            <person name="Porter K.M."/>
            <person name="Ramsey Y."/>
            <person name="Reichwald K."/>
            <person name="Rhodes S."/>
            <person name="Ridler K.A."/>
            <person name="Schlessinger D."/>
            <person name="Schueler M.G."/>
            <person name="Sehra H.K."/>
            <person name="Shaw-Smith C."/>
            <person name="Shen H."/>
            <person name="Sheridan E.M."/>
            <person name="Shownkeen R."/>
            <person name="Skuce C.D."/>
            <person name="Smith M.L."/>
            <person name="Sotheran E.C."/>
            <person name="Steingruber H.E."/>
            <person name="Steward C.A."/>
            <person name="Storey R."/>
            <person name="Swann R.M."/>
            <person name="Swarbreck D."/>
            <person name="Tabor P.E."/>
            <person name="Taudien S."/>
            <person name="Taylor T."/>
            <person name="Teague B."/>
            <person name="Thomas K."/>
            <person name="Thorpe A."/>
            <person name="Timms K."/>
            <person name="Tracey A."/>
            <person name="Trevanion S."/>
            <person name="Tromans A.C."/>
            <person name="d'Urso M."/>
            <person name="Verduzco D."/>
            <person name="Villasana D."/>
            <person name="Waldron L."/>
            <person name="Wall M."/>
            <person name="Wang Q."/>
            <person name="Warren J."/>
            <person name="Warry G.L."/>
            <person name="Wei X."/>
            <person name="West A."/>
            <person name="Whitehead S.L."/>
            <person name="Whiteley M.N."/>
            <person name="Wilkinson J.E."/>
            <person name="Willey D.L."/>
            <person name="Williams G."/>
            <person name="Williams L."/>
            <person name="Williamson A."/>
            <person name="Williamson H."/>
            <person name="Wilming L."/>
            <person name="Woodmansey R.L."/>
            <person name="Wray P.W."/>
            <person name="Yen J."/>
            <person name="Zhang J."/>
            <person name="Zhou J."/>
            <person name="Zoghbi H."/>
            <person name="Zorilla S."/>
            <person name="Buck D."/>
            <person name="Reinhardt R."/>
            <person name="Poustka A."/>
            <person name="Rosenthal A."/>
            <person name="Lehrach H."/>
            <person name="Meindl A."/>
            <person name="Minx P.J."/>
            <person name="Hillier L.W."/>
            <person name="Willard H.F."/>
            <person name="Wilson R.K."/>
            <person name="Waterston R.H."/>
            <person name="Rice C.M."/>
            <person name="Vaudin M."/>
            <person name="Coulson A."/>
            <person name="Nelson D.L."/>
            <person name="Weinstock G."/>
            <person name="Sulston J.E."/>
            <person name="Durbin R.M."/>
            <person name="Hubbard T."/>
            <person name="Gibbs R.A."/>
            <person name="Beck S."/>
            <person name="Rogers J."/>
            <person name="Bentley D.R."/>
        </authorList>
    </citation>
    <scope>NUCLEOTIDE SEQUENCE [LARGE SCALE GENOMIC DNA]</scope>
</reference>
<reference key="3">
    <citation type="journal article" date="2004" name="Genome Res.">
        <title>The status, quality, and expansion of the NIH full-length cDNA project: the Mammalian Gene Collection (MGC).</title>
        <authorList>
            <consortium name="The MGC Project Team"/>
        </authorList>
    </citation>
    <scope>NUCLEOTIDE SEQUENCE [LARGE SCALE MRNA]</scope>
</reference>
<reference key="4">
    <citation type="journal article" date="1999" name="Cancer Res.">
        <title>Characterization of the GAGE genes that are expressed in various human cancers and in normal testis.</title>
        <authorList>
            <person name="De Backer O."/>
            <person name="Arden K.C."/>
            <person name="Boretti M."/>
            <person name="Vantomme V."/>
            <person name="De Smet C."/>
            <person name="Czekay S."/>
            <person name="Viars C.S."/>
            <person name="De Plaen E."/>
            <person name="Brasseur F."/>
            <person name="Chomez P."/>
            <person name="Van den Eynde B."/>
            <person name="Boon T."/>
            <person name="van der Bruggen P."/>
        </authorList>
    </citation>
    <scope>CHARACTERIZATION OF ANTIGENIC PEPTIDES</scope>
</reference>
<reference key="5">
    <citation type="journal article" date="2008" name="Tissue Antigens">
        <title>An overview of the GAGE cancer/testis antigen family with the inclusion of newly identified members.</title>
        <authorList>
            <person name="Gjerstorff M.F."/>
            <person name="Ditzel H.J."/>
        </authorList>
    </citation>
    <scope>GAGE FAMILY</scope>
</reference>
<evidence type="ECO:0000256" key="1">
    <source>
        <dbReference type="SAM" id="MobiDB-lite"/>
    </source>
</evidence>
<evidence type="ECO:0000269" key="2">
    <source>
    </source>
</evidence>
<evidence type="ECO:0000269" key="3">
    <source>
    </source>
</evidence>
<evidence type="ECO:0000305" key="4"/>
<evidence type="ECO:0000312" key="5">
    <source>
        <dbReference type="HGNC" id="HGNC:4098"/>
    </source>
</evidence>
<sequence length="117" mass="12885">MSWRGRSTYYWPRPRRYVQPPEMIGPMRPEQFSDEVEPATPEEGEPATQRQDPAAAQEGEDEGASAGQGPKPEADSQEQGHPQTGCECEDGPDGQEMDPPNPEEVKTPEEGEGQSQC</sequence>
<organism>
    <name type="scientific">Homo sapiens</name>
    <name type="common">Human</name>
    <dbReference type="NCBI Taxonomy" id="9606"/>
    <lineage>
        <taxon>Eukaryota</taxon>
        <taxon>Metazoa</taxon>
        <taxon>Chordata</taxon>
        <taxon>Craniata</taxon>
        <taxon>Vertebrata</taxon>
        <taxon>Euteleostomi</taxon>
        <taxon>Mammalia</taxon>
        <taxon>Eutheria</taxon>
        <taxon>Euarchontoglires</taxon>
        <taxon>Primates</taxon>
        <taxon>Haplorrhini</taxon>
        <taxon>Catarrhini</taxon>
        <taxon>Hominidae</taxon>
        <taxon>Homo</taxon>
    </lineage>
</organism>
<protein>
    <recommendedName>
        <fullName evidence="4">G antigen 1</fullName>
        <shortName>GAGE-1</shortName>
    </recommendedName>
    <alternativeName>
        <fullName>Antigen MZ2-F</fullName>
    </alternativeName>
    <alternativeName>
        <fullName>Cancer/testis antigen 4.1</fullName>
        <shortName>CT4.1</shortName>
    </alternativeName>
</protein>